<reference evidence="7" key="1">
    <citation type="submission" date="2007-12" db="EMBL/GenBank/DDBJ databases">
        <title>DOE Joint Genome Institute Lottia gigantea EST project.</title>
        <authorList>
            <person name="Richardson P."/>
            <person name="Lucas S."/>
            <person name="Rokhsar D."/>
            <person name="Wang M."/>
            <person name="Lindquist E.A."/>
        </authorList>
    </citation>
    <scope>NUCLEOTIDE SEQUENCE [LARGE SCALE MRNA]</scope>
    <scope>IDENTIFICATION</scope>
    <source>
        <tissue evidence="6">Mantle</tissue>
    </source>
</reference>
<reference key="2">
    <citation type="journal article" date="2013" name="FEBS J.">
        <title>The shell-forming proteome of Lottia gigantea reveals both deep conservations and lineage-specific novelties.</title>
        <authorList>
            <person name="Marie B."/>
            <person name="Jackson D.J."/>
            <person name="Ramos-Silva P."/>
            <person name="Zanella-Cleon I."/>
            <person name="Guichard N."/>
            <person name="Marin F."/>
        </authorList>
    </citation>
    <scope>PROTEIN SEQUENCE OF 4-12 AND 54-83</scope>
    <scope>SUBCELLULAR LOCATION</scope>
    <scope>TISSUE SPECIFICITY</scope>
    <source>
        <tissue>Shell</tissue>
    </source>
</reference>
<sequence>AYRQTENLLYGRSFHAEAHIVHHHSDFADVAEASKHLGGIAVVSIFLTNDKQRYNPTTNRALDTILNHLKDLIEFTEEEHVCRAENRRIKRTGIYSKLGVERACRENNPNYDADSPDGDPSNKCQLHKKARGCGDPIENVTFNPNDLLSSIPTYLTFEGGLTTPPCSESVIWIVAEHPAYISNKNIEYMNKLKSRIVNQTISDFGNLRPLHDPAERDVFRIIYGRYPPRREEDDERGDGRHDLRDDDDNYDDDDYYNDDYSNDDYYDDDYYYDDYDDDTDDDHKDDGRRDRGGGDDKGGRGKGDDRGGRDNGDNRTGRGNRNDRGRRGNGDDSGGRGNGNNRDGRGNGDSRDRNNGNGNGRENGGVRGNGNDRDGRRDNGNGGDNGTRRGNGDDRGGRRNEDRGENRRGKDDQERESEDGRRRRRRFNGRRRRRGRGDDKGDDKGDDN</sequence>
<feature type="chain" id="PRO_0000415265" description="Putative carbonic anhydrase 2">
    <location>
        <begin position="1"/>
        <end position="448"/>
    </location>
</feature>
<feature type="domain" description="Alpha-carbonic anhydrase" evidence="3">
    <location>
        <begin position="1"/>
        <end position="222"/>
    </location>
</feature>
<feature type="region of interest" description="Disordered" evidence="4">
    <location>
        <begin position="229"/>
        <end position="448"/>
    </location>
</feature>
<feature type="compositionally biased region" description="Acidic residues" evidence="4">
    <location>
        <begin position="245"/>
        <end position="280"/>
    </location>
</feature>
<feature type="compositionally biased region" description="Basic and acidic residues" evidence="4">
    <location>
        <begin position="281"/>
        <end position="334"/>
    </location>
</feature>
<feature type="compositionally biased region" description="Basic and acidic residues" evidence="4">
    <location>
        <begin position="342"/>
        <end position="354"/>
    </location>
</feature>
<feature type="compositionally biased region" description="Gly residues" evidence="4">
    <location>
        <begin position="357"/>
        <end position="368"/>
    </location>
</feature>
<feature type="compositionally biased region" description="Basic and acidic residues" evidence="4">
    <location>
        <begin position="370"/>
        <end position="379"/>
    </location>
</feature>
<feature type="compositionally biased region" description="Basic and acidic residues" evidence="4">
    <location>
        <begin position="386"/>
        <end position="421"/>
    </location>
</feature>
<feature type="compositionally biased region" description="Basic residues" evidence="4">
    <location>
        <begin position="422"/>
        <end position="435"/>
    </location>
</feature>
<feature type="compositionally biased region" description="Basic and acidic residues" evidence="4">
    <location>
        <begin position="436"/>
        <end position="448"/>
    </location>
</feature>
<feature type="binding site" evidence="1">
    <location>
        <position position="19"/>
    </location>
    <ligand>
        <name>Zn(2+)</name>
        <dbReference type="ChEBI" id="CHEBI:29105"/>
        <note>catalytic</note>
    </ligand>
</feature>
<feature type="glycosylation site" description="N-linked (GlcNAc...) asparagine" evidence="2">
    <location>
        <position position="139"/>
    </location>
</feature>
<feature type="glycosylation site" description="N-linked (GlcNAc...) asparagine" evidence="2">
    <location>
        <position position="198"/>
    </location>
</feature>
<feature type="glycosylation site" description="N-linked (GlcNAc...) asparagine" evidence="2">
    <location>
        <position position="314"/>
    </location>
</feature>
<feature type="glycosylation site" description="N-linked (GlcNAc...) asparagine" evidence="2">
    <location>
        <position position="385"/>
    </location>
</feature>
<feature type="non-terminal residue" evidence="7">
    <location>
        <position position="1"/>
    </location>
</feature>
<accession>B3A0Q6</accession>
<protein>
    <recommendedName>
        <fullName>Putative carbonic anhydrase 2</fullName>
        <ecNumber>4.2.1.1</ecNumber>
    </recommendedName>
</protein>
<name>CAH2_LOTGI</name>
<organism>
    <name type="scientific">Lottia gigantea</name>
    <name type="common">Giant owl limpet</name>
    <dbReference type="NCBI Taxonomy" id="225164"/>
    <lineage>
        <taxon>Eukaryota</taxon>
        <taxon>Metazoa</taxon>
        <taxon>Spiralia</taxon>
        <taxon>Lophotrochozoa</taxon>
        <taxon>Mollusca</taxon>
        <taxon>Gastropoda</taxon>
        <taxon>Patellogastropoda</taxon>
        <taxon>Lottioidea</taxon>
        <taxon>Lottiidae</taxon>
        <taxon>Lottia</taxon>
    </lineage>
</organism>
<comment type="function">
    <text evidence="1">Reversible hydration of carbon dioxide.</text>
</comment>
<comment type="catalytic activity">
    <reaction>
        <text>hydrogencarbonate + H(+) = CO2 + H2O</text>
        <dbReference type="Rhea" id="RHEA:10748"/>
        <dbReference type="ChEBI" id="CHEBI:15377"/>
        <dbReference type="ChEBI" id="CHEBI:15378"/>
        <dbReference type="ChEBI" id="CHEBI:16526"/>
        <dbReference type="ChEBI" id="CHEBI:17544"/>
        <dbReference type="EC" id="4.2.1.1"/>
    </reaction>
</comment>
<comment type="subcellular location">
    <subcellularLocation>
        <location evidence="5">Secreted</location>
    </subcellularLocation>
</comment>
<comment type="tissue specificity">
    <text evidence="5">Component of the acid-insoluble and acid-soluble organic matrix of calcified layers of the shell (at protein level).</text>
</comment>
<comment type="similarity">
    <text evidence="7">Belongs to the alpha-carbonic anhydrase family.</text>
</comment>
<evidence type="ECO:0000250" key="1"/>
<evidence type="ECO:0000255" key="2"/>
<evidence type="ECO:0000255" key="3">
    <source>
        <dbReference type="PROSITE-ProRule" id="PRU01134"/>
    </source>
</evidence>
<evidence type="ECO:0000256" key="4">
    <source>
        <dbReference type="SAM" id="MobiDB-lite"/>
    </source>
</evidence>
<evidence type="ECO:0000269" key="5">
    <source>
    </source>
</evidence>
<evidence type="ECO:0000269" key="6">
    <source ref="1"/>
</evidence>
<evidence type="ECO:0000305" key="7"/>
<proteinExistence type="evidence at protein level"/>
<keyword id="KW-0903">Direct protein sequencing</keyword>
<keyword id="KW-0325">Glycoprotein</keyword>
<keyword id="KW-0456">Lyase</keyword>
<keyword id="KW-0479">Metal-binding</keyword>
<keyword id="KW-0964">Secreted</keyword>
<keyword id="KW-0862">Zinc</keyword>
<dbReference type="EC" id="4.2.1.1"/>
<dbReference type="EMBL" id="FC628743">
    <property type="status" value="NOT_ANNOTATED_CDS"/>
    <property type="molecule type" value="mRNA"/>
</dbReference>
<dbReference type="EMBL" id="FC635662">
    <property type="status" value="NOT_ANNOTATED_CDS"/>
    <property type="molecule type" value="mRNA"/>
</dbReference>
<dbReference type="GO" id="GO:0005576">
    <property type="term" value="C:extracellular region"/>
    <property type="evidence" value="ECO:0007669"/>
    <property type="project" value="UniProtKB-SubCell"/>
</dbReference>
<dbReference type="GO" id="GO:0004089">
    <property type="term" value="F:carbonate dehydratase activity"/>
    <property type="evidence" value="ECO:0007669"/>
    <property type="project" value="UniProtKB-EC"/>
</dbReference>
<dbReference type="GO" id="GO:0008270">
    <property type="term" value="F:zinc ion binding"/>
    <property type="evidence" value="ECO:0007669"/>
    <property type="project" value="InterPro"/>
</dbReference>
<dbReference type="Gene3D" id="3.10.200.10">
    <property type="entry name" value="Alpha carbonic anhydrase"/>
    <property type="match status" value="1"/>
</dbReference>
<dbReference type="InterPro" id="IPR001148">
    <property type="entry name" value="CA_dom"/>
</dbReference>
<dbReference type="InterPro" id="IPR036398">
    <property type="entry name" value="CA_dom_sf"/>
</dbReference>
<dbReference type="InterPro" id="IPR023561">
    <property type="entry name" value="Carbonic_anhydrase_a-class"/>
</dbReference>
<dbReference type="PANTHER" id="PTHR18952">
    <property type="entry name" value="CARBONIC ANHYDRASE"/>
    <property type="match status" value="1"/>
</dbReference>
<dbReference type="PANTHER" id="PTHR18952:SF265">
    <property type="entry name" value="CARBONIC ANHYDRASE"/>
    <property type="match status" value="1"/>
</dbReference>
<dbReference type="Pfam" id="PF00194">
    <property type="entry name" value="Carb_anhydrase"/>
    <property type="match status" value="2"/>
</dbReference>
<dbReference type="SUPFAM" id="SSF51069">
    <property type="entry name" value="Carbonic anhydrase"/>
    <property type="match status" value="1"/>
</dbReference>
<dbReference type="PROSITE" id="PS51144">
    <property type="entry name" value="ALPHA_CA_2"/>
    <property type="match status" value="1"/>
</dbReference>